<dbReference type="EC" id="4.6.1.17" evidence="1"/>
<dbReference type="EMBL" id="CP000352">
    <property type="protein sequence ID" value="ABF07372.1"/>
    <property type="molecule type" value="Genomic_DNA"/>
</dbReference>
<dbReference type="RefSeq" id="WP_011515357.1">
    <property type="nucleotide sequence ID" value="NC_007973.1"/>
</dbReference>
<dbReference type="SMR" id="Q1LR54"/>
<dbReference type="STRING" id="266264.Rmet_0486"/>
<dbReference type="KEGG" id="rme:Rmet_0486"/>
<dbReference type="eggNOG" id="COG0315">
    <property type="taxonomic scope" value="Bacteria"/>
</dbReference>
<dbReference type="HOGENOM" id="CLU_074693_1_1_4"/>
<dbReference type="UniPathway" id="UPA00344"/>
<dbReference type="Proteomes" id="UP000002429">
    <property type="component" value="Chromosome"/>
</dbReference>
<dbReference type="GO" id="GO:0061799">
    <property type="term" value="F:cyclic pyranopterin monophosphate synthase activity"/>
    <property type="evidence" value="ECO:0007669"/>
    <property type="project" value="UniProtKB-UniRule"/>
</dbReference>
<dbReference type="GO" id="GO:0006777">
    <property type="term" value="P:Mo-molybdopterin cofactor biosynthetic process"/>
    <property type="evidence" value="ECO:0007669"/>
    <property type="project" value="UniProtKB-UniRule"/>
</dbReference>
<dbReference type="CDD" id="cd01420">
    <property type="entry name" value="MoaC_PE"/>
    <property type="match status" value="1"/>
</dbReference>
<dbReference type="Gene3D" id="3.30.70.640">
    <property type="entry name" value="Molybdopterin cofactor biosynthesis C (MoaC) domain"/>
    <property type="match status" value="1"/>
</dbReference>
<dbReference type="HAMAP" id="MF_01224_B">
    <property type="entry name" value="MoaC_B"/>
    <property type="match status" value="1"/>
</dbReference>
<dbReference type="InterPro" id="IPR023045">
    <property type="entry name" value="MoaC"/>
</dbReference>
<dbReference type="InterPro" id="IPR047594">
    <property type="entry name" value="MoaC_bact/euk"/>
</dbReference>
<dbReference type="InterPro" id="IPR036522">
    <property type="entry name" value="MoaC_sf"/>
</dbReference>
<dbReference type="InterPro" id="IPR050105">
    <property type="entry name" value="MoCo_biosynth_MoaA/MoaC"/>
</dbReference>
<dbReference type="InterPro" id="IPR002820">
    <property type="entry name" value="Mopterin_CF_biosynth-C_dom"/>
</dbReference>
<dbReference type="NCBIfam" id="TIGR00581">
    <property type="entry name" value="moaC"/>
    <property type="match status" value="1"/>
</dbReference>
<dbReference type="NCBIfam" id="NF006870">
    <property type="entry name" value="PRK09364.1"/>
    <property type="match status" value="1"/>
</dbReference>
<dbReference type="PANTHER" id="PTHR22960">
    <property type="entry name" value="MOLYBDOPTERIN COFACTOR SYNTHESIS PROTEIN A"/>
    <property type="match status" value="1"/>
</dbReference>
<dbReference type="Pfam" id="PF01967">
    <property type="entry name" value="MoaC"/>
    <property type="match status" value="1"/>
</dbReference>
<dbReference type="SUPFAM" id="SSF55040">
    <property type="entry name" value="Molybdenum cofactor biosynthesis protein C, MoaC"/>
    <property type="match status" value="1"/>
</dbReference>
<accession>Q1LR54</accession>
<name>MOAC_CUPMC</name>
<protein>
    <recommendedName>
        <fullName evidence="1">Cyclic pyranopterin monophosphate synthase</fullName>
        <ecNumber evidence="1">4.6.1.17</ecNumber>
    </recommendedName>
    <alternativeName>
        <fullName evidence="1">Molybdenum cofactor biosynthesis protein C</fullName>
    </alternativeName>
</protein>
<evidence type="ECO:0000255" key="1">
    <source>
        <dbReference type="HAMAP-Rule" id="MF_01224"/>
    </source>
</evidence>
<reference key="1">
    <citation type="journal article" date="2010" name="PLoS ONE">
        <title>The complete genome sequence of Cupriavidus metallidurans strain CH34, a master survivalist in harsh and anthropogenic environments.</title>
        <authorList>
            <person name="Janssen P.J."/>
            <person name="Van Houdt R."/>
            <person name="Moors H."/>
            <person name="Monsieurs P."/>
            <person name="Morin N."/>
            <person name="Michaux A."/>
            <person name="Benotmane M.A."/>
            <person name="Leys N."/>
            <person name="Vallaeys T."/>
            <person name="Lapidus A."/>
            <person name="Monchy S."/>
            <person name="Medigue C."/>
            <person name="Taghavi S."/>
            <person name="McCorkle S."/>
            <person name="Dunn J."/>
            <person name="van der Lelie D."/>
            <person name="Mergeay M."/>
        </authorList>
    </citation>
    <scope>NUCLEOTIDE SEQUENCE [LARGE SCALE GENOMIC DNA]</scope>
    <source>
        <strain>ATCC 43123 / DSM 2839 / NBRC 102507 / CH34</strain>
    </source>
</reference>
<feature type="chain" id="PRO_1000054127" description="Cyclic pyranopterin monophosphate synthase">
    <location>
        <begin position="1"/>
        <end position="159"/>
    </location>
</feature>
<feature type="active site" evidence="1">
    <location>
        <position position="128"/>
    </location>
</feature>
<feature type="binding site" evidence="1">
    <location>
        <begin position="75"/>
        <end position="77"/>
    </location>
    <ligand>
        <name>substrate</name>
    </ligand>
</feature>
<feature type="binding site" evidence="1">
    <location>
        <begin position="113"/>
        <end position="114"/>
    </location>
    <ligand>
        <name>substrate</name>
    </ligand>
</feature>
<gene>
    <name evidence="1" type="primary">moaC</name>
    <name type="ordered locus">Rmet_0486</name>
</gene>
<proteinExistence type="inferred from homology"/>
<sequence length="159" mass="16654">MSQLTHFDNAGQAHMVDVGNKANTHRVAVATGTITMLPATFALVRDGSAKKGDVLGIARVAAIMATKRTADLIPLCHPIGLTKVAVDFALDEPSSTIACIVRTETHGQTGVEMEALTGVQVALLTIYDMCKAVDRGMVMGNVKLLEKHGGKSGDWVAGA</sequence>
<keyword id="KW-0456">Lyase</keyword>
<keyword id="KW-0501">Molybdenum cofactor biosynthesis</keyword>
<keyword id="KW-1185">Reference proteome</keyword>
<organism>
    <name type="scientific">Cupriavidus metallidurans (strain ATCC 43123 / DSM 2839 / NBRC 102507 / CH34)</name>
    <name type="common">Ralstonia metallidurans</name>
    <dbReference type="NCBI Taxonomy" id="266264"/>
    <lineage>
        <taxon>Bacteria</taxon>
        <taxon>Pseudomonadati</taxon>
        <taxon>Pseudomonadota</taxon>
        <taxon>Betaproteobacteria</taxon>
        <taxon>Burkholderiales</taxon>
        <taxon>Burkholderiaceae</taxon>
        <taxon>Cupriavidus</taxon>
    </lineage>
</organism>
<comment type="function">
    <text evidence="1">Catalyzes the conversion of (8S)-3',8-cyclo-7,8-dihydroguanosine 5'-triphosphate to cyclic pyranopterin monophosphate (cPMP).</text>
</comment>
<comment type="catalytic activity">
    <reaction evidence="1">
        <text>(8S)-3',8-cyclo-7,8-dihydroguanosine 5'-triphosphate = cyclic pyranopterin phosphate + diphosphate</text>
        <dbReference type="Rhea" id="RHEA:49580"/>
        <dbReference type="ChEBI" id="CHEBI:33019"/>
        <dbReference type="ChEBI" id="CHEBI:59648"/>
        <dbReference type="ChEBI" id="CHEBI:131766"/>
        <dbReference type="EC" id="4.6.1.17"/>
    </reaction>
</comment>
<comment type="pathway">
    <text evidence="1">Cofactor biosynthesis; molybdopterin biosynthesis.</text>
</comment>
<comment type="subunit">
    <text evidence="1">Homohexamer; trimer of dimers.</text>
</comment>
<comment type="similarity">
    <text evidence="1">Belongs to the MoaC family.</text>
</comment>